<name>IF2_LAWIP</name>
<organism>
    <name type="scientific">Lawsonia intracellularis (strain PHE/MN1-00)</name>
    <dbReference type="NCBI Taxonomy" id="363253"/>
    <lineage>
        <taxon>Bacteria</taxon>
        <taxon>Pseudomonadati</taxon>
        <taxon>Thermodesulfobacteriota</taxon>
        <taxon>Desulfovibrionia</taxon>
        <taxon>Desulfovibrionales</taxon>
        <taxon>Desulfovibrionaceae</taxon>
        <taxon>Lawsonia</taxon>
    </lineage>
</organism>
<accession>Q1MQY8</accession>
<feature type="chain" id="PRO_1000008263" description="Translation initiation factor IF-2">
    <location>
        <begin position="1"/>
        <end position="961"/>
    </location>
</feature>
<feature type="domain" description="tr-type G">
    <location>
        <begin position="460"/>
        <end position="627"/>
    </location>
</feature>
<feature type="region of interest" description="Disordered" evidence="3">
    <location>
        <begin position="146"/>
        <end position="373"/>
    </location>
</feature>
<feature type="region of interest" description="G1" evidence="1">
    <location>
        <begin position="469"/>
        <end position="476"/>
    </location>
</feature>
<feature type="region of interest" description="G2" evidence="1">
    <location>
        <begin position="494"/>
        <end position="498"/>
    </location>
</feature>
<feature type="region of interest" description="G3" evidence="1">
    <location>
        <begin position="515"/>
        <end position="518"/>
    </location>
</feature>
<feature type="region of interest" description="G4" evidence="1">
    <location>
        <begin position="569"/>
        <end position="572"/>
    </location>
</feature>
<feature type="region of interest" description="G5" evidence="1">
    <location>
        <begin position="605"/>
        <end position="607"/>
    </location>
</feature>
<feature type="compositionally biased region" description="Polar residues" evidence="3">
    <location>
        <begin position="146"/>
        <end position="158"/>
    </location>
</feature>
<feature type="compositionally biased region" description="Basic and acidic residues" evidence="3">
    <location>
        <begin position="163"/>
        <end position="176"/>
    </location>
</feature>
<feature type="compositionally biased region" description="Low complexity" evidence="3">
    <location>
        <begin position="177"/>
        <end position="187"/>
    </location>
</feature>
<feature type="compositionally biased region" description="Basic and acidic residues" evidence="3">
    <location>
        <begin position="230"/>
        <end position="239"/>
    </location>
</feature>
<feature type="compositionally biased region" description="Polar residues" evidence="3">
    <location>
        <begin position="241"/>
        <end position="285"/>
    </location>
</feature>
<feature type="compositionally biased region" description="Polar residues" evidence="3">
    <location>
        <begin position="301"/>
        <end position="310"/>
    </location>
</feature>
<feature type="compositionally biased region" description="Basic residues" evidence="3">
    <location>
        <begin position="355"/>
        <end position="364"/>
    </location>
</feature>
<feature type="binding site" evidence="2">
    <location>
        <begin position="469"/>
        <end position="476"/>
    </location>
    <ligand>
        <name>GTP</name>
        <dbReference type="ChEBI" id="CHEBI:37565"/>
    </ligand>
</feature>
<feature type="binding site" evidence="2">
    <location>
        <begin position="515"/>
        <end position="519"/>
    </location>
    <ligand>
        <name>GTP</name>
        <dbReference type="ChEBI" id="CHEBI:37565"/>
    </ligand>
</feature>
<feature type="binding site" evidence="2">
    <location>
        <begin position="569"/>
        <end position="572"/>
    </location>
    <ligand>
        <name>GTP</name>
        <dbReference type="ChEBI" id="CHEBI:37565"/>
    </ligand>
</feature>
<dbReference type="EMBL" id="AM180252">
    <property type="protein sequence ID" value="CAJ54589.1"/>
    <property type="molecule type" value="Genomic_DNA"/>
</dbReference>
<dbReference type="RefSeq" id="WP_011526618.1">
    <property type="nucleotide sequence ID" value="NC_008011.1"/>
</dbReference>
<dbReference type="SMR" id="Q1MQY8"/>
<dbReference type="STRING" id="363253.LI0535"/>
<dbReference type="KEGG" id="lip:LI0535"/>
<dbReference type="eggNOG" id="COG0532">
    <property type="taxonomic scope" value="Bacteria"/>
</dbReference>
<dbReference type="HOGENOM" id="CLU_006301_5_1_7"/>
<dbReference type="OrthoDB" id="9811804at2"/>
<dbReference type="Proteomes" id="UP000002430">
    <property type="component" value="Chromosome"/>
</dbReference>
<dbReference type="GO" id="GO:0005829">
    <property type="term" value="C:cytosol"/>
    <property type="evidence" value="ECO:0007669"/>
    <property type="project" value="TreeGrafter"/>
</dbReference>
<dbReference type="GO" id="GO:0005525">
    <property type="term" value="F:GTP binding"/>
    <property type="evidence" value="ECO:0007669"/>
    <property type="project" value="UniProtKB-KW"/>
</dbReference>
<dbReference type="GO" id="GO:0003924">
    <property type="term" value="F:GTPase activity"/>
    <property type="evidence" value="ECO:0007669"/>
    <property type="project" value="UniProtKB-UniRule"/>
</dbReference>
<dbReference type="GO" id="GO:0003743">
    <property type="term" value="F:translation initiation factor activity"/>
    <property type="evidence" value="ECO:0007669"/>
    <property type="project" value="UniProtKB-UniRule"/>
</dbReference>
<dbReference type="CDD" id="cd01887">
    <property type="entry name" value="IF2_eIF5B"/>
    <property type="match status" value="1"/>
</dbReference>
<dbReference type="CDD" id="cd03702">
    <property type="entry name" value="IF2_mtIF2_II"/>
    <property type="match status" value="1"/>
</dbReference>
<dbReference type="CDD" id="cd03692">
    <property type="entry name" value="mtIF2_IVc"/>
    <property type="match status" value="1"/>
</dbReference>
<dbReference type="FunFam" id="2.40.30.10:FF:000007">
    <property type="entry name" value="Translation initiation factor IF-2"/>
    <property type="match status" value="1"/>
</dbReference>
<dbReference type="FunFam" id="2.40.30.10:FF:000008">
    <property type="entry name" value="Translation initiation factor IF-2"/>
    <property type="match status" value="1"/>
</dbReference>
<dbReference type="FunFam" id="3.40.50.10050:FF:000001">
    <property type="entry name" value="Translation initiation factor IF-2"/>
    <property type="match status" value="1"/>
</dbReference>
<dbReference type="FunFam" id="3.40.50.300:FF:000019">
    <property type="entry name" value="Translation initiation factor IF-2"/>
    <property type="match status" value="1"/>
</dbReference>
<dbReference type="Gene3D" id="1.10.10.2480">
    <property type="match status" value="1"/>
</dbReference>
<dbReference type="Gene3D" id="3.40.50.300">
    <property type="entry name" value="P-loop containing nucleotide triphosphate hydrolases"/>
    <property type="match status" value="1"/>
</dbReference>
<dbReference type="Gene3D" id="2.40.30.10">
    <property type="entry name" value="Translation factors"/>
    <property type="match status" value="2"/>
</dbReference>
<dbReference type="Gene3D" id="3.40.50.10050">
    <property type="entry name" value="Translation initiation factor IF- 2, domain 3"/>
    <property type="match status" value="1"/>
</dbReference>
<dbReference type="HAMAP" id="MF_00100_B">
    <property type="entry name" value="IF_2_B"/>
    <property type="match status" value="1"/>
</dbReference>
<dbReference type="InterPro" id="IPR053905">
    <property type="entry name" value="EF-G-like_DII"/>
</dbReference>
<dbReference type="InterPro" id="IPR044145">
    <property type="entry name" value="IF2_II"/>
</dbReference>
<dbReference type="InterPro" id="IPR006847">
    <property type="entry name" value="IF2_N"/>
</dbReference>
<dbReference type="InterPro" id="IPR027417">
    <property type="entry name" value="P-loop_NTPase"/>
</dbReference>
<dbReference type="InterPro" id="IPR005225">
    <property type="entry name" value="Small_GTP-bd"/>
</dbReference>
<dbReference type="InterPro" id="IPR000795">
    <property type="entry name" value="T_Tr_GTP-bd_dom"/>
</dbReference>
<dbReference type="InterPro" id="IPR000178">
    <property type="entry name" value="TF_IF2_bacterial-like"/>
</dbReference>
<dbReference type="InterPro" id="IPR015760">
    <property type="entry name" value="TIF_IF2"/>
</dbReference>
<dbReference type="InterPro" id="IPR023115">
    <property type="entry name" value="TIF_IF2_dom3"/>
</dbReference>
<dbReference type="InterPro" id="IPR036925">
    <property type="entry name" value="TIF_IF2_dom3_sf"/>
</dbReference>
<dbReference type="InterPro" id="IPR009000">
    <property type="entry name" value="Transl_B-barrel_sf"/>
</dbReference>
<dbReference type="NCBIfam" id="TIGR00487">
    <property type="entry name" value="IF-2"/>
    <property type="match status" value="1"/>
</dbReference>
<dbReference type="NCBIfam" id="TIGR00231">
    <property type="entry name" value="small_GTP"/>
    <property type="match status" value="1"/>
</dbReference>
<dbReference type="PANTHER" id="PTHR43381:SF5">
    <property type="entry name" value="TR-TYPE G DOMAIN-CONTAINING PROTEIN"/>
    <property type="match status" value="1"/>
</dbReference>
<dbReference type="PANTHER" id="PTHR43381">
    <property type="entry name" value="TRANSLATION INITIATION FACTOR IF-2-RELATED"/>
    <property type="match status" value="1"/>
</dbReference>
<dbReference type="Pfam" id="PF22042">
    <property type="entry name" value="EF-G_D2"/>
    <property type="match status" value="1"/>
</dbReference>
<dbReference type="Pfam" id="PF00009">
    <property type="entry name" value="GTP_EFTU"/>
    <property type="match status" value="1"/>
</dbReference>
<dbReference type="Pfam" id="PF11987">
    <property type="entry name" value="IF-2"/>
    <property type="match status" value="1"/>
</dbReference>
<dbReference type="Pfam" id="PF04760">
    <property type="entry name" value="IF2_N"/>
    <property type="match status" value="2"/>
</dbReference>
<dbReference type="SUPFAM" id="SSF52156">
    <property type="entry name" value="Initiation factor IF2/eIF5b, domain 3"/>
    <property type="match status" value="1"/>
</dbReference>
<dbReference type="SUPFAM" id="SSF52540">
    <property type="entry name" value="P-loop containing nucleoside triphosphate hydrolases"/>
    <property type="match status" value="1"/>
</dbReference>
<dbReference type="SUPFAM" id="SSF50447">
    <property type="entry name" value="Translation proteins"/>
    <property type="match status" value="2"/>
</dbReference>
<dbReference type="PROSITE" id="PS51722">
    <property type="entry name" value="G_TR_2"/>
    <property type="match status" value="1"/>
</dbReference>
<dbReference type="PROSITE" id="PS01176">
    <property type="entry name" value="IF2"/>
    <property type="match status" value="1"/>
</dbReference>
<sequence>MINDKIKVKDLAIELGVSTKDLLRVLRELEISAKSTISNISIEDLPKIRAQFNTPNTNKEEERRQIQPGVILRRKRQQPSTNQTDIKLNPVDTNVSESTIQTENLILENKNTLSPHIEETTEKIPATTNEILYNSQIAKIVQYPTPSVPNKTLTTTPHQTKKNHSEKDVLESHDSSNKNIKQSSSQNTEKTNRKPAASAIPEGSSAPSLLPPVSEQIRRLHDEETENSSSEEKNVDIQQKEIPSTQVRVISKPNITQSHSWDANNTRSSSGQRTETEKQSNTAPHTDSREHTGHNKRPVSYQGQNRNNFIATPDTIPNVEHDGQNKKKRHTSRRSTEFNHKFQYNNEDDDISRQNRGRKRHKQKTTSQVTTQPIKLTKRKIRVEEAIRVADMAHQMGLKANEIIKVLFNLGVMATINMSLDIDTATLVAAEFGYEVEKIGFTEEDYLVATAPEQSESLKRRPPVVTIMGHVDHGKTSLLDAIRKTNVTGGEAGGITQHIGAYHVTTKSGEIVFLDTPGHEAFTTMRARGAQVTDIVVLVVAADDGVMEQTREAVNHARAANVPIMVAVNKMDKPEANPDRVLRELSDIGLVPEDWGGDTIVTKVSAKSLDGIDELLELLALQTDILELKANPDKPARGHIVEAKLDKGRGPIATVLIQEGTLHQGDTFVCGVFSGRVRAMFNDQGKKVKDAGPSMPIEVQGFEGVPEAGEAFICLPDEKLARRIAESRAIKQREKELAKESRVTLETFLSKTSNEKEAQVLNLVVKSDVQGSLEAILEALRKLSTAKVRINIIHGGSGAITESDILLASASDAIVIGFNVRPTAKVKEVAEQENVDIRFYDIIYKLVEEIKSAMAGLLAPISREVYLGQADVREIFNVPKIGTIAGSHVSDGKVLRNAGVRLLREGVVVYTGGIASLRRFKEDVREVQKGYECGISLENFNDIKLGDVIESFETVEEAASL</sequence>
<gene>
    <name evidence="2" type="primary">infB</name>
    <name type="ordered locus">LI0535</name>
</gene>
<comment type="function">
    <text evidence="2">One of the essential components for the initiation of protein synthesis. Protects formylmethionyl-tRNA from spontaneous hydrolysis and promotes its binding to the 30S ribosomal subunits. Also involved in the hydrolysis of GTP during the formation of the 70S ribosomal complex.</text>
</comment>
<comment type="subcellular location">
    <subcellularLocation>
        <location evidence="2">Cytoplasm</location>
    </subcellularLocation>
</comment>
<comment type="similarity">
    <text evidence="2">Belongs to the TRAFAC class translation factor GTPase superfamily. Classic translation factor GTPase family. IF-2 subfamily.</text>
</comment>
<keyword id="KW-0963">Cytoplasm</keyword>
<keyword id="KW-0342">GTP-binding</keyword>
<keyword id="KW-0396">Initiation factor</keyword>
<keyword id="KW-0547">Nucleotide-binding</keyword>
<keyword id="KW-0648">Protein biosynthesis</keyword>
<keyword id="KW-1185">Reference proteome</keyword>
<protein>
    <recommendedName>
        <fullName evidence="2">Translation initiation factor IF-2</fullName>
    </recommendedName>
</protein>
<proteinExistence type="inferred from homology"/>
<reference key="1">
    <citation type="submission" date="2005-11" db="EMBL/GenBank/DDBJ databases">
        <title>The complete genome sequence of Lawsonia intracellularis: the causative agent of proliferative enteropathy.</title>
        <authorList>
            <person name="Kaur K."/>
            <person name="Zhang Q."/>
            <person name="Beckler D."/>
            <person name="Munir S."/>
            <person name="Li L."/>
            <person name="Kinsley K."/>
            <person name="Herron L."/>
            <person name="Peterson A."/>
            <person name="May B."/>
            <person name="Singh S."/>
            <person name="Gebhart C."/>
            <person name="Kapur V."/>
        </authorList>
    </citation>
    <scope>NUCLEOTIDE SEQUENCE [LARGE SCALE GENOMIC DNA]</scope>
    <source>
        <strain>PHE/MN1-00</strain>
    </source>
</reference>
<evidence type="ECO:0000250" key="1"/>
<evidence type="ECO:0000255" key="2">
    <source>
        <dbReference type="HAMAP-Rule" id="MF_00100"/>
    </source>
</evidence>
<evidence type="ECO:0000256" key="3">
    <source>
        <dbReference type="SAM" id="MobiDB-lite"/>
    </source>
</evidence>